<evidence type="ECO:0000269" key="1">
    <source>
    </source>
</evidence>
<evidence type="ECO:0000269" key="2">
    <source>
    </source>
</evidence>
<evidence type="ECO:0000269" key="3">
    <source>
    </source>
</evidence>
<evidence type="ECO:0000269" key="4">
    <source>
    </source>
</evidence>
<evidence type="ECO:0000305" key="5"/>
<evidence type="ECO:0007829" key="6">
    <source>
        <dbReference type="PDB" id="2WLI"/>
    </source>
</evidence>
<evidence type="ECO:0007829" key="7">
    <source>
        <dbReference type="PDB" id="2WLJ"/>
    </source>
</evidence>
<evidence type="ECO:0007829" key="8">
    <source>
        <dbReference type="PDB" id="2WLK"/>
    </source>
</evidence>
<evidence type="ECO:0007829" key="9">
    <source>
        <dbReference type="PDB" id="2X6C"/>
    </source>
</evidence>
<evidence type="ECO:0007829" key="10">
    <source>
        <dbReference type="PDB" id="6O9U"/>
    </source>
</evidence>
<dbReference type="PDB" id="1XL6">
    <property type="method" value="X-ray"/>
    <property type="resolution" value="2.85 A"/>
    <property type="chains" value="A/B=1-295"/>
</dbReference>
<dbReference type="PDB" id="2WLH">
    <property type="method" value="X-ray"/>
    <property type="resolution" value="3.28 A"/>
    <property type="chains" value="A=5-295"/>
</dbReference>
<dbReference type="PDB" id="2WLI">
    <property type="method" value="X-ray"/>
    <property type="resolution" value="3.09 A"/>
    <property type="chains" value="A/B=5-295"/>
</dbReference>
<dbReference type="PDB" id="2WLJ">
    <property type="method" value="X-ray"/>
    <property type="resolution" value="2.60 A"/>
    <property type="chains" value="A/B=1-295"/>
</dbReference>
<dbReference type="PDB" id="2WLK">
    <property type="method" value="X-ray"/>
    <property type="resolution" value="2.80 A"/>
    <property type="chains" value="A/B=1-295"/>
</dbReference>
<dbReference type="PDB" id="2WLM">
    <property type="method" value="X-ray"/>
    <property type="resolution" value="3.61 A"/>
    <property type="chains" value="A/B/C/D=5-295"/>
</dbReference>
<dbReference type="PDB" id="2WLN">
    <property type="method" value="X-ray"/>
    <property type="resolution" value="3.44 A"/>
    <property type="chains" value="A/B/C/D/E/F/G/H=5-295"/>
</dbReference>
<dbReference type="PDB" id="2WLO">
    <property type="method" value="X-ray"/>
    <property type="resolution" value="4.04 A"/>
    <property type="chains" value="A/B=1-295"/>
</dbReference>
<dbReference type="PDB" id="2X6A">
    <property type="method" value="X-ray"/>
    <property type="resolution" value="3.10 A"/>
    <property type="chains" value="A=5-295"/>
</dbReference>
<dbReference type="PDB" id="2X6B">
    <property type="method" value="X-ray"/>
    <property type="resolution" value="3.30 A"/>
    <property type="chains" value="A=5-295"/>
</dbReference>
<dbReference type="PDB" id="2X6C">
    <property type="method" value="X-ray"/>
    <property type="resolution" value="2.70 A"/>
    <property type="chains" value="A=5-295"/>
</dbReference>
<dbReference type="PDB" id="3ZRS">
    <property type="method" value="X-ray"/>
    <property type="resolution" value="3.05 A"/>
    <property type="chains" value="A=1-295"/>
</dbReference>
<dbReference type="PDB" id="4LP8">
    <property type="method" value="X-ray"/>
    <property type="resolution" value="2.46 A"/>
    <property type="chains" value="A=1-295"/>
</dbReference>
<dbReference type="PDB" id="6O9T">
    <property type="method" value="X-ray"/>
    <property type="resolution" value="4.01 A"/>
    <property type="chains" value="A=1-295"/>
</dbReference>
<dbReference type="PDB" id="6O9U">
    <property type="method" value="X-ray"/>
    <property type="resolution" value="2.00 A"/>
    <property type="chains" value="A=1-295"/>
</dbReference>
<dbReference type="PDB" id="6O9V">
    <property type="method" value="X-ray"/>
    <property type="resolution" value="3.09 A"/>
    <property type="chains" value="A/B=1-295"/>
</dbReference>
<dbReference type="PDB" id="7ADI">
    <property type="method" value="X-ray"/>
    <property type="resolution" value="2.80 A"/>
    <property type="chains" value="A/B=1-295"/>
</dbReference>
<dbReference type="PDB" id="7N9K">
    <property type="method" value="X-ray"/>
    <property type="resolution" value="2.72 A"/>
    <property type="chains" value="A=1-295"/>
</dbReference>
<dbReference type="PDB" id="7N9L">
    <property type="method" value="X-ray"/>
    <property type="resolution" value="2.40 A"/>
    <property type="chains" value="A=1-295"/>
</dbReference>
<dbReference type="PDBsum" id="1XL6"/>
<dbReference type="PDBsum" id="2WLH"/>
<dbReference type="PDBsum" id="2WLI"/>
<dbReference type="PDBsum" id="2WLJ"/>
<dbReference type="PDBsum" id="2WLK"/>
<dbReference type="PDBsum" id="2WLM"/>
<dbReference type="PDBsum" id="2WLN"/>
<dbReference type="PDBsum" id="2WLO"/>
<dbReference type="PDBsum" id="2X6A"/>
<dbReference type="PDBsum" id="2X6B"/>
<dbReference type="PDBsum" id="2X6C"/>
<dbReference type="PDBsum" id="3ZRS"/>
<dbReference type="PDBsum" id="4LP8"/>
<dbReference type="PDBsum" id="6O9T"/>
<dbReference type="PDBsum" id="6O9U"/>
<dbReference type="PDBsum" id="6O9V"/>
<dbReference type="PDBsum" id="7ADI"/>
<dbReference type="PDBsum" id="7N9K"/>
<dbReference type="PDBsum" id="7N9L"/>
<dbReference type="SMR" id="D9N164"/>
<dbReference type="DIP" id="DIP-59916N"/>
<dbReference type="TCDB" id="1.A.2.2.2">
    <property type="family name" value="the inward rectifier k(+) channel (irk-c) family"/>
</dbReference>
<dbReference type="EvolutionaryTrace" id="D9N164"/>
<dbReference type="GO" id="GO:0034702">
    <property type="term" value="C:monoatomic ion channel complex"/>
    <property type="evidence" value="ECO:0007669"/>
    <property type="project" value="UniProtKB-KW"/>
</dbReference>
<dbReference type="GO" id="GO:0005886">
    <property type="term" value="C:plasma membrane"/>
    <property type="evidence" value="ECO:0007669"/>
    <property type="project" value="TreeGrafter"/>
</dbReference>
<dbReference type="GO" id="GO:0042802">
    <property type="term" value="F:identical protein binding"/>
    <property type="evidence" value="ECO:0000353"/>
    <property type="project" value="IntAct"/>
</dbReference>
<dbReference type="GO" id="GO:0005242">
    <property type="term" value="F:inward rectifier potassium channel activity"/>
    <property type="evidence" value="ECO:0007669"/>
    <property type="project" value="InterPro"/>
</dbReference>
<dbReference type="GO" id="GO:1990573">
    <property type="term" value="P:potassium ion import across plasma membrane"/>
    <property type="evidence" value="ECO:0007669"/>
    <property type="project" value="TreeGrafter"/>
</dbReference>
<dbReference type="GO" id="GO:0034765">
    <property type="term" value="P:regulation of monoatomic ion transmembrane transport"/>
    <property type="evidence" value="ECO:0007669"/>
    <property type="project" value="TreeGrafter"/>
</dbReference>
<dbReference type="FunFam" id="1.10.287.70:FF:000498">
    <property type="entry name" value="Inward rectifier potassium channel Kirbac3.1"/>
    <property type="match status" value="1"/>
</dbReference>
<dbReference type="FunFam" id="2.60.40.1400:FF:000009">
    <property type="entry name" value="Inward rectifier potassium channel Kirbac3.1"/>
    <property type="match status" value="1"/>
</dbReference>
<dbReference type="Gene3D" id="1.10.287.70">
    <property type="match status" value="1"/>
</dbReference>
<dbReference type="Gene3D" id="2.60.40.1400">
    <property type="entry name" value="G protein-activated inward rectifier potassium channel 1"/>
    <property type="match status" value="1"/>
</dbReference>
<dbReference type="InterPro" id="IPR014756">
    <property type="entry name" value="Ig_E-set"/>
</dbReference>
<dbReference type="InterPro" id="IPR041647">
    <property type="entry name" value="IRK_C"/>
</dbReference>
<dbReference type="InterPro" id="IPR013099">
    <property type="entry name" value="K_chnl_dom"/>
</dbReference>
<dbReference type="InterPro" id="IPR016449">
    <property type="entry name" value="K_chnl_inward-rec_Kir"/>
</dbReference>
<dbReference type="InterPro" id="IPR013518">
    <property type="entry name" value="K_chnl_inward-rec_Kir_cyto"/>
</dbReference>
<dbReference type="PANTHER" id="PTHR11767">
    <property type="entry name" value="INWARD RECTIFIER POTASSIUM CHANNEL"/>
    <property type="match status" value="1"/>
</dbReference>
<dbReference type="PANTHER" id="PTHR11767:SF102">
    <property type="entry name" value="INWARDLY RECTIFYING POTASSIUM CHANNEL 1, ISOFORM F"/>
    <property type="match status" value="1"/>
</dbReference>
<dbReference type="Pfam" id="PF07885">
    <property type="entry name" value="Ion_trans_2"/>
    <property type="match status" value="1"/>
</dbReference>
<dbReference type="Pfam" id="PF17655">
    <property type="entry name" value="IRK_C"/>
    <property type="match status" value="1"/>
</dbReference>
<dbReference type="PRINTS" id="PR01320">
    <property type="entry name" value="KIRCHANNEL"/>
</dbReference>
<dbReference type="SUPFAM" id="SSF81296">
    <property type="entry name" value="E set domains"/>
    <property type="match status" value="1"/>
</dbReference>
<dbReference type="SUPFAM" id="SSF81324">
    <property type="entry name" value="Voltage-gated potassium channels"/>
    <property type="match status" value="1"/>
</dbReference>
<organism>
    <name type="scientific">Paramagnetospirillum magnetotacticum</name>
    <name type="common">Aquaspirillum magnetotacticum</name>
    <dbReference type="NCBI Taxonomy" id="188"/>
    <lineage>
        <taxon>Bacteria</taxon>
        <taxon>Pseudomonadati</taxon>
        <taxon>Pseudomonadota</taxon>
        <taxon>Alphaproteobacteria</taxon>
        <taxon>Rhodospirillales</taxon>
        <taxon>Magnetospirillaceae</taxon>
        <taxon>Paramagnetospirillum</taxon>
    </lineage>
</organism>
<keyword id="KW-0002">3D-structure</keyword>
<keyword id="KW-0407">Ion channel</keyword>
<keyword id="KW-0406">Ion transport</keyword>
<keyword id="KW-0472">Membrane</keyword>
<keyword id="KW-0630">Potassium</keyword>
<keyword id="KW-0633">Potassium transport</keyword>
<keyword id="KW-0812">Transmembrane</keyword>
<keyword id="KW-1133">Transmembrane helix</keyword>
<keyword id="KW-0813">Transport</keyword>
<keyword id="KW-0851">Voltage-gated channel</keyword>
<feature type="chain" id="PRO_0000422432" description="Inward rectifier potassium channel Kirbac3.1">
    <location>
        <begin position="1"/>
        <end position="295"/>
    </location>
</feature>
<feature type="topological domain" description="Cytoplasmic">
    <location>
        <begin position="1"/>
        <end position="47"/>
    </location>
</feature>
<feature type="transmembrane region" description="Helical">
    <location>
        <begin position="48"/>
        <end position="69"/>
    </location>
</feature>
<feature type="topological domain" description="Extracellular">
    <location>
        <begin position="70"/>
        <end position="82"/>
    </location>
</feature>
<feature type="intramembrane region" description="Helical; Pore-forming">
    <location>
        <begin position="83"/>
        <end position="95"/>
    </location>
</feature>
<feature type="transmembrane region" description="Helical">
    <location>
        <begin position="107"/>
        <end position="131"/>
    </location>
</feature>
<feature type="topological domain" description="Cytoplasmic">
    <location>
        <begin position="132"/>
        <end position="295"/>
    </location>
</feature>
<feature type="short sequence motif" description="Selectivity filter">
    <location>
        <begin position="96"/>
        <end position="100"/>
    </location>
</feature>
<feature type="mutagenesis site" description="Decreases channel activity." evidence="4">
    <original>Y</original>
    <variation>F</variation>
    <location>
        <position position="38"/>
    </location>
</feature>
<feature type="mutagenesis site" description="Increased channel conductance." evidence="3">
    <original>I</original>
    <variation>S</variation>
    <location>
        <position position="75"/>
    </location>
</feature>
<feature type="mutagenesis site" description="Increased channel conductance." evidence="3">
    <original>A</original>
    <variation>P</variation>
    <location>
        <position position="78"/>
    </location>
</feature>
<feature type="mutagenesis site" description="Strongly increased channel conductance due to defective gating." evidence="3">
    <original>F</original>
    <variation>L</variation>
    <location>
        <position position="88"/>
    </location>
</feature>
<feature type="mutagenesis site" description="Increased channel conductance." evidence="3">
    <original>T</original>
    <variation>I</variation>
    <location>
        <position position="93"/>
    </location>
</feature>
<feature type="mutagenesis site" description="Increased channel conductance." evidence="3">
    <original>G</original>
    <variation>D</variation>
    <location>
        <position position="98"/>
    </location>
</feature>
<feature type="mutagenesis site" description="Increased channel conductance." evidence="3">
    <original>L</original>
    <variation>Q</variation>
    <location>
        <position position="118"/>
    </location>
</feature>
<feature type="mutagenesis site" description="Increased channel conductance." evidence="3">
    <original>M</original>
    <variation>K</variation>
    <location>
        <position position="121"/>
    </location>
</feature>
<feature type="mutagenesis site" description="Increased channel conductance." evidence="3">
    <original>G</original>
    <variation>D</variation>
    <location>
        <position position="123"/>
    </location>
</feature>
<feature type="mutagenesis site" description="Increased channel conductance." evidence="3">
    <original>A</original>
    <variation>E</variation>
    <location>
        <position position="125"/>
    </location>
</feature>
<feature type="mutagenesis site" description="Promotes open channel conformation." evidence="3 4">
    <original>S</original>
    <variation>D</variation>
    <variation>E</variation>
    <variation>K</variation>
    <variation>R</variation>
    <location>
        <position position="129"/>
    </location>
</feature>
<feature type="mutagenesis site" description="Increased channel conductance." evidence="3">
    <original>I</original>
    <variation>F</variation>
    <location>
        <position position="150"/>
    </location>
</feature>
<feature type="mutagenesis site" description="Increased channel conductance." evidence="3">
    <original>V</original>
    <variation>I</variation>
    <location>
        <position position="181"/>
    </location>
</feature>
<feature type="mutagenesis site" description="Increased channel conductance." evidence="3">
    <original>S</original>
    <variation>L</variation>
    <location>
        <position position="205"/>
    </location>
</feature>
<feature type="strand" evidence="6">
    <location>
        <begin position="19"/>
        <end position="21"/>
    </location>
</feature>
<feature type="strand" evidence="7">
    <location>
        <begin position="24"/>
        <end position="26"/>
    </location>
</feature>
<feature type="helix" evidence="10">
    <location>
        <begin position="37"/>
        <end position="43"/>
    </location>
</feature>
<feature type="helix" evidence="10">
    <location>
        <begin position="46"/>
        <end position="71"/>
    </location>
</feature>
<feature type="helix" evidence="10">
    <location>
        <begin position="83"/>
        <end position="94"/>
    </location>
</feature>
<feature type="strand" evidence="10">
    <location>
        <begin position="100"/>
        <end position="104"/>
    </location>
</feature>
<feature type="helix" evidence="10">
    <location>
        <begin position="106"/>
        <end position="135"/>
    </location>
</feature>
<feature type="strand" evidence="10">
    <location>
        <begin position="142"/>
        <end position="144"/>
    </location>
</feature>
<feature type="strand" evidence="10">
    <location>
        <begin position="148"/>
        <end position="153"/>
    </location>
</feature>
<feature type="strand" evidence="10">
    <location>
        <begin position="156"/>
        <end position="165"/>
    </location>
</feature>
<feature type="strand" evidence="10">
    <location>
        <begin position="167"/>
        <end position="169"/>
    </location>
</feature>
<feature type="strand" evidence="10">
    <location>
        <begin position="171"/>
        <end position="185"/>
    </location>
</feature>
<feature type="strand" evidence="9">
    <location>
        <begin position="187"/>
        <end position="189"/>
    </location>
</feature>
<feature type="strand" evidence="10">
    <location>
        <begin position="191"/>
        <end position="197"/>
    </location>
</feature>
<feature type="strand" evidence="10">
    <location>
        <begin position="203"/>
        <end position="208"/>
    </location>
</feature>
<feature type="strand" evidence="10">
    <location>
        <begin position="210"/>
        <end position="217"/>
    </location>
</feature>
<feature type="turn" evidence="10">
    <location>
        <begin position="223"/>
        <end position="226"/>
    </location>
</feature>
<feature type="helix" evidence="10">
    <location>
        <begin position="229"/>
        <end position="234"/>
    </location>
</feature>
<feature type="strand" evidence="10">
    <location>
        <begin position="238"/>
        <end position="247"/>
    </location>
</feature>
<feature type="turn" evidence="10">
    <location>
        <begin position="248"/>
        <end position="251"/>
    </location>
</feature>
<feature type="strand" evidence="10">
    <location>
        <begin position="252"/>
        <end position="260"/>
    </location>
</feature>
<feature type="helix" evidence="10">
    <location>
        <begin position="262"/>
        <end position="264"/>
    </location>
</feature>
<feature type="strand" evidence="10">
    <location>
        <begin position="265"/>
        <end position="267"/>
    </location>
</feature>
<feature type="strand" evidence="10">
    <location>
        <begin position="275"/>
        <end position="277"/>
    </location>
</feature>
<feature type="turn" evidence="8">
    <location>
        <begin position="279"/>
        <end position="281"/>
    </location>
</feature>
<feature type="strand" evidence="10">
    <location>
        <begin position="283"/>
        <end position="285"/>
    </location>
</feature>
<feature type="helix" evidence="10">
    <location>
        <begin position="287"/>
        <end position="289"/>
    </location>
</feature>
<name>IRK10_PARME</name>
<sequence length="295" mass="32915">MTGGMKPPARKPRILNSDGSSNITRLGLEKRGWLDDHYHDLLTVSWPVFITLITGLYLVTNALFALAYLACGDVIENARPGSFTDAFFFSVQTMATIGYGKLIPIGPLANTLVTLEALCGMLGLAVAASLIYARFTRPTAGVLFSSRMVISDFEGKPTLMMRLANLRIEQIIEADVHLVLVRSEISQEGMVFRRFHDLTLTRSRSPIFSLSWTVMHPIDHHSPIYGETDETLRNSHSEFLVLFTGHHEAFAQNVHARHAYSCDEIIWGGHFVDVFTTLPDGRRALDLGKFHEIAQ</sequence>
<comment type="function">
    <text evidence="2 3 4">Inward rectifier potassium channel that mediates potassium uptake into the cell. Inward rectifier potassium channels are characterized by a greater tendency to allow potassium to flow into the cell rather than out of it. The inward rectification may be achieved by the blockage of outward current by cytoplasmic divalent metal ions and polyamines. Complements an E.coli mutant that is defective in K(+) uptake.</text>
</comment>
<comment type="subunit">
    <text evidence="1 4">Homotetramer.</text>
</comment>
<comment type="interaction">
    <interactant intactId="EBI-15558188">
        <id>D9N164</id>
    </interactant>
    <interactant intactId="EBI-15558188">
        <id>D9N164</id>
        <label>-</label>
    </interactant>
    <organismsDiffer>false</organismsDiffer>
    <experiments>2</experiments>
</comment>
<comment type="subcellular location">
    <subcellularLocation>
        <location evidence="1 2 3 4">Membrane</location>
        <topology evidence="1 2 3 4">Multi-pass membrane protein</topology>
    </subcellularLocation>
</comment>
<comment type="domain">
    <text evidence="2">A conformation change implying rotational movement of the cytoplasmic domains plays an important role in channel opening and closing. Release of polyamines from their binding sites on the cytoplasmic domain may block the ion permeation pathway, preventing the efflux of intracellular potassium ions.</text>
</comment>
<comment type="similarity">
    <text evidence="5">Belongs to the inward rectifier-type potassium channel (TC 1.A.2.1) family. KCNJ11 subfamily.</text>
</comment>
<accession>D9N164</accession>
<accession>D9N165</accession>
<accession>D9N166</accession>
<proteinExistence type="evidence at protein level"/>
<reference key="1">
    <citation type="journal article" date="2010" name="J. Biol. Chem.">
        <title>Functional complementation and genetic deletion studies of KirBac channels: activatory mutations highlight gating-sensitive domains.</title>
        <authorList>
            <person name="Paynter J.J."/>
            <person name="Andres-Enguix I."/>
            <person name="Fowler P.W."/>
            <person name="Tottey S."/>
            <person name="Cheng W."/>
            <person name="Enkvetchakul D."/>
            <person name="Bavro V.N."/>
            <person name="Kusakabe Y."/>
            <person name="Sansom M.S."/>
            <person name="Robinson N.J."/>
            <person name="Nichols C.G."/>
            <person name="Tucker S.J."/>
        </authorList>
    </citation>
    <scope>FUNCTION</scope>
    <scope>SUBCELLULAR LOCATION</scope>
    <scope>MUTAGENESIS OF ILE-75; ALA-78; PHE-88; THR-93; GLY-98; LEU-118; MET-121; GLY-123; ALA-125; SER-129; ILE-150; VAL-181 AND SER-205</scope>
</reference>
<reference key="2">
    <citation type="journal article" date="2005" name="Structure">
        <title>Two different conformational states of the KirBac3.1 potassium channel revealed by electron crystallography.</title>
        <authorList>
            <person name="Kuo A."/>
            <person name="Domene C."/>
            <person name="Johnson L.N."/>
            <person name="Doyle D.A."/>
            <person name="Venien-Bryan C."/>
        </authorList>
    </citation>
    <scope>STRUCTURE BY ELECTRON MICROSCOPY (9 ANGSTROMS)</scope>
    <scope>SUBCELLULAR LOCATION</scope>
    <scope>TOPOLOGY</scope>
    <scope>SUBUNIT</scope>
</reference>
<reference key="3">
    <citation type="journal article" date="2010" name="Cell">
        <title>Domain reorientation and rotation of an intracellular assembly regulate conduction in Kir potassium channels.</title>
        <authorList>
            <person name="Clarke O.B."/>
            <person name="Caputo A.T."/>
            <person name="Hill A.P."/>
            <person name="Vandenberg J.I."/>
            <person name="Smith B.J."/>
            <person name="Gulbis J.M."/>
        </authorList>
    </citation>
    <scope>X-RAY CRYSTALLOGRAPHY (2.70 ANGSTROMS)</scope>
    <scope>FUNCTION</scope>
    <scope>DOMAIN</scope>
    <scope>POLYAMINE-BINDING</scope>
    <scope>SUBCELLULAR LOCATION</scope>
    <scope>TOPOLOGY</scope>
</reference>
<reference key="4">
    <citation type="journal article" date="2012" name="Nat. Struct. Mol. Biol.">
        <title>Structure of a KirBac potassium channel with an open bundle crossing indicates a mechanism of channel gating.</title>
        <authorList>
            <person name="Bavro V.N."/>
            <person name="De Zorzi R."/>
            <person name="Schmidt M.R."/>
            <person name="Muniz J.R."/>
            <person name="Zubcevic L."/>
            <person name="Sansom M.S."/>
            <person name="Venien-Bryan C."/>
            <person name="Tucker S.J."/>
        </authorList>
    </citation>
    <scope>X-RAY CRYSTALLOGRAPHY (3.05 ANGSTROMS) OF MUTANT ARG-129</scope>
    <scope>FUNCTION</scope>
    <scope>SUBUNIT</scope>
    <scope>SUBCELLULAR LOCATION</scope>
    <scope>TOPOLOGY</scope>
    <scope>MUTAGENESIS OF TYR-38 AND SER-129</scope>
</reference>
<protein>
    <recommendedName>
        <fullName>Inward rectifier potassium channel Kirbac3.1</fullName>
    </recommendedName>
</protein>